<name>RUVB_XANOM</name>
<keyword id="KW-0067">ATP-binding</keyword>
<keyword id="KW-0963">Cytoplasm</keyword>
<keyword id="KW-0227">DNA damage</keyword>
<keyword id="KW-0233">DNA recombination</keyword>
<keyword id="KW-0234">DNA repair</keyword>
<keyword id="KW-0238">DNA-binding</keyword>
<keyword id="KW-0378">Hydrolase</keyword>
<keyword id="KW-0547">Nucleotide-binding</keyword>
<sequence>MDQRIIASSSTREDDAADASIRPKRLADYLGQQPVREQMEIYIQAAKARGEAMDHVLIFGPPGLGKTTLSHVIANELGVSLRVTSGPVIEKAGDLAALLTNLQPHDVLFIDEIHRLSPVVEEVLYPAMEDFQIDIMIGDGPAARSIKIDLPPFTLIGATTRAGLLTAPLRDRFGIVQRLEFYSPQELTRIVIRSAAILGIDCTPEGAAEIARRARGTPRIANRLLRRVRDYAQVKAAGHIDLPVAQAAMQMLKVDPEGFDELDRRMLRTIVEHFDGGPVGVESLAASLSEERGTLEDVIEPYLIQQGFLIRTARGRMVTTKAYLHLGLKPPRDRAPGIGEPGDLF</sequence>
<proteinExistence type="inferred from homology"/>
<organism>
    <name type="scientific">Xanthomonas oryzae pv. oryzae (strain MAFF 311018)</name>
    <dbReference type="NCBI Taxonomy" id="342109"/>
    <lineage>
        <taxon>Bacteria</taxon>
        <taxon>Pseudomonadati</taxon>
        <taxon>Pseudomonadota</taxon>
        <taxon>Gammaproteobacteria</taxon>
        <taxon>Lysobacterales</taxon>
        <taxon>Lysobacteraceae</taxon>
        <taxon>Xanthomonas</taxon>
    </lineage>
</organism>
<gene>
    <name evidence="1" type="primary">ruvB</name>
    <name type="ordered locus">XOO1547</name>
</gene>
<feature type="chain" id="PRO_0000235432" description="Holliday junction branch migration complex subunit RuvB">
    <location>
        <begin position="1"/>
        <end position="345"/>
    </location>
</feature>
<feature type="region of interest" description="Large ATPase domain (RuvB-L)" evidence="1">
    <location>
        <begin position="1"/>
        <end position="182"/>
    </location>
</feature>
<feature type="region of interest" description="Small ATPAse domain (RuvB-S)" evidence="1">
    <location>
        <begin position="183"/>
        <end position="253"/>
    </location>
</feature>
<feature type="region of interest" description="Head domain (RuvB-H)" evidence="1">
    <location>
        <begin position="256"/>
        <end position="345"/>
    </location>
</feature>
<feature type="binding site" evidence="1">
    <location>
        <position position="21"/>
    </location>
    <ligand>
        <name>ATP</name>
        <dbReference type="ChEBI" id="CHEBI:30616"/>
    </ligand>
</feature>
<feature type="binding site" evidence="1">
    <location>
        <position position="22"/>
    </location>
    <ligand>
        <name>ATP</name>
        <dbReference type="ChEBI" id="CHEBI:30616"/>
    </ligand>
</feature>
<feature type="binding site" evidence="1">
    <location>
        <position position="63"/>
    </location>
    <ligand>
        <name>ATP</name>
        <dbReference type="ChEBI" id="CHEBI:30616"/>
    </ligand>
</feature>
<feature type="binding site" evidence="1">
    <location>
        <position position="66"/>
    </location>
    <ligand>
        <name>ATP</name>
        <dbReference type="ChEBI" id="CHEBI:30616"/>
    </ligand>
</feature>
<feature type="binding site" evidence="1">
    <location>
        <position position="67"/>
    </location>
    <ligand>
        <name>ATP</name>
        <dbReference type="ChEBI" id="CHEBI:30616"/>
    </ligand>
</feature>
<feature type="binding site" evidence="1">
    <location>
        <position position="67"/>
    </location>
    <ligand>
        <name>Mg(2+)</name>
        <dbReference type="ChEBI" id="CHEBI:18420"/>
    </ligand>
</feature>
<feature type="binding site" evidence="1">
    <location>
        <position position="68"/>
    </location>
    <ligand>
        <name>ATP</name>
        <dbReference type="ChEBI" id="CHEBI:30616"/>
    </ligand>
</feature>
<feature type="binding site" evidence="1">
    <location>
        <begin position="129"/>
        <end position="131"/>
    </location>
    <ligand>
        <name>ATP</name>
        <dbReference type="ChEBI" id="CHEBI:30616"/>
    </ligand>
</feature>
<feature type="binding site" evidence="1">
    <location>
        <position position="172"/>
    </location>
    <ligand>
        <name>ATP</name>
        <dbReference type="ChEBI" id="CHEBI:30616"/>
    </ligand>
</feature>
<feature type="binding site" evidence="1">
    <location>
        <position position="182"/>
    </location>
    <ligand>
        <name>ATP</name>
        <dbReference type="ChEBI" id="CHEBI:30616"/>
    </ligand>
</feature>
<feature type="binding site" evidence="1">
    <location>
        <position position="219"/>
    </location>
    <ligand>
        <name>ATP</name>
        <dbReference type="ChEBI" id="CHEBI:30616"/>
    </ligand>
</feature>
<feature type="binding site" evidence="1">
    <location>
        <position position="292"/>
    </location>
    <ligand>
        <name>DNA</name>
        <dbReference type="ChEBI" id="CHEBI:16991"/>
    </ligand>
</feature>
<feature type="binding site" evidence="1">
    <location>
        <position position="311"/>
    </location>
    <ligand>
        <name>DNA</name>
        <dbReference type="ChEBI" id="CHEBI:16991"/>
    </ligand>
</feature>
<feature type="binding site" evidence="1">
    <location>
        <position position="316"/>
    </location>
    <ligand>
        <name>DNA</name>
        <dbReference type="ChEBI" id="CHEBI:16991"/>
    </ligand>
</feature>
<accession>Q2P575</accession>
<dbReference type="EC" id="3.6.4.-" evidence="1"/>
<dbReference type="EMBL" id="AP008229">
    <property type="protein sequence ID" value="BAE68302.1"/>
    <property type="molecule type" value="Genomic_DNA"/>
</dbReference>
<dbReference type="RefSeq" id="WP_010363979.1">
    <property type="nucleotide sequence ID" value="NC_007705.1"/>
</dbReference>
<dbReference type="SMR" id="Q2P575"/>
<dbReference type="GeneID" id="69689177"/>
<dbReference type="KEGG" id="xom:XOO1547"/>
<dbReference type="HOGENOM" id="CLU_055599_1_0_6"/>
<dbReference type="GO" id="GO:0005737">
    <property type="term" value="C:cytoplasm"/>
    <property type="evidence" value="ECO:0007669"/>
    <property type="project" value="UniProtKB-SubCell"/>
</dbReference>
<dbReference type="GO" id="GO:0048476">
    <property type="term" value="C:Holliday junction resolvase complex"/>
    <property type="evidence" value="ECO:0007669"/>
    <property type="project" value="UniProtKB-UniRule"/>
</dbReference>
<dbReference type="GO" id="GO:0005524">
    <property type="term" value="F:ATP binding"/>
    <property type="evidence" value="ECO:0007669"/>
    <property type="project" value="UniProtKB-UniRule"/>
</dbReference>
<dbReference type="GO" id="GO:0016887">
    <property type="term" value="F:ATP hydrolysis activity"/>
    <property type="evidence" value="ECO:0007669"/>
    <property type="project" value="InterPro"/>
</dbReference>
<dbReference type="GO" id="GO:0000400">
    <property type="term" value="F:four-way junction DNA binding"/>
    <property type="evidence" value="ECO:0007669"/>
    <property type="project" value="UniProtKB-UniRule"/>
</dbReference>
<dbReference type="GO" id="GO:0009378">
    <property type="term" value="F:four-way junction helicase activity"/>
    <property type="evidence" value="ECO:0007669"/>
    <property type="project" value="InterPro"/>
</dbReference>
<dbReference type="GO" id="GO:0006310">
    <property type="term" value="P:DNA recombination"/>
    <property type="evidence" value="ECO:0007669"/>
    <property type="project" value="UniProtKB-UniRule"/>
</dbReference>
<dbReference type="GO" id="GO:0006281">
    <property type="term" value="P:DNA repair"/>
    <property type="evidence" value="ECO:0007669"/>
    <property type="project" value="UniProtKB-UniRule"/>
</dbReference>
<dbReference type="CDD" id="cd00009">
    <property type="entry name" value="AAA"/>
    <property type="match status" value="1"/>
</dbReference>
<dbReference type="FunFam" id="3.40.50.300:FF:000073">
    <property type="entry name" value="Holliday junction ATP-dependent DNA helicase RuvB"/>
    <property type="match status" value="1"/>
</dbReference>
<dbReference type="Gene3D" id="1.10.8.60">
    <property type="match status" value="1"/>
</dbReference>
<dbReference type="Gene3D" id="3.40.50.300">
    <property type="entry name" value="P-loop containing nucleotide triphosphate hydrolases"/>
    <property type="match status" value="1"/>
</dbReference>
<dbReference type="Gene3D" id="1.10.10.10">
    <property type="entry name" value="Winged helix-like DNA-binding domain superfamily/Winged helix DNA-binding domain"/>
    <property type="match status" value="1"/>
</dbReference>
<dbReference type="HAMAP" id="MF_00016">
    <property type="entry name" value="DNA_HJ_migration_RuvB"/>
    <property type="match status" value="1"/>
</dbReference>
<dbReference type="InterPro" id="IPR003593">
    <property type="entry name" value="AAA+_ATPase"/>
</dbReference>
<dbReference type="InterPro" id="IPR041445">
    <property type="entry name" value="AAA_lid_4"/>
</dbReference>
<dbReference type="InterPro" id="IPR004605">
    <property type="entry name" value="DNA_helicase_Holl-junc_RuvB"/>
</dbReference>
<dbReference type="InterPro" id="IPR027417">
    <property type="entry name" value="P-loop_NTPase"/>
</dbReference>
<dbReference type="InterPro" id="IPR008824">
    <property type="entry name" value="RuvB-like_N"/>
</dbReference>
<dbReference type="InterPro" id="IPR008823">
    <property type="entry name" value="RuvB_C"/>
</dbReference>
<dbReference type="InterPro" id="IPR036388">
    <property type="entry name" value="WH-like_DNA-bd_sf"/>
</dbReference>
<dbReference type="InterPro" id="IPR036390">
    <property type="entry name" value="WH_DNA-bd_sf"/>
</dbReference>
<dbReference type="NCBIfam" id="NF000868">
    <property type="entry name" value="PRK00080.1"/>
    <property type="match status" value="1"/>
</dbReference>
<dbReference type="NCBIfam" id="TIGR00635">
    <property type="entry name" value="ruvB"/>
    <property type="match status" value="1"/>
</dbReference>
<dbReference type="PANTHER" id="PTHR42848">
    <property type="match status" value="1"/>
</dbReference>
<dbReference type="PANTHER" id="PTHR42848:SF1">
    <property type="entry name" value="HOLLIDAY JUNCTION BRANCH MIGRATION COMPLEX SUBUNIT RUVB"/>
    <property type="match status" value="1"/>
</dbReference>
<dbReference type="Pfam" id="PF17864">
    <property type="entry name" value="AAA_lid_4"/>
    <property type="match status" value="1"/>
</dbReference>
<dbReference type="Pfam" id="PF05491">
    <property type="entry name" value="RuvB_C"/>
    <property type="match status" value="1"/>
</dbReference>
<dbReference type="Pfam" id="PF05496">
    <property type="entry name" value="RuvB_N"/>
    <property type="match status" value="1"/>
</dbReference>
<dbReference type="SMART" id="SM00382">
    <property type="entry name" value="AAA"/>
    <property type="match status" value="1"/>
</dbReference>
<dbReference type="SUPFAM" id="SSF52540">
    <property type="entry name" value="P-loop containing nucleoside triphosphate hydrolases"/>
    <property type="match status" value="1"/>
</dbReference>
<dbReference type="SUPFAM" id="SSF46785">
    <property type="entry name" value="Winged helix' DNA-binding domain"/>
    <property type="match status" value="1"/>
</dbReference>
<protein>
    <recommendedName>
        <fullName evidence="1">Holliday junction branch migration complex subunit RuvB</fullName>
        <ecNumber evidence="1">3.6.4.-</ecNumber>
    </recommendedName>
</protein>
<evidence type="ECO:0000255" key="1">
    <source>
        <dbReference type="HAMAP-Rule" id="MF_00016"/>
    </source>
</evidence>
<comment type="function">
    <text evidence="1">The RuvA-RuvB-RuvC complex processes Holliday junction (HJ) DNA during genetic recombination and DNA repair, while the RuvA-RuvB complex plays an important role in the rescue of blocked DNA replication forks via replication fork reversal (RFR). RuvA specifically binds to HJ cruciform DNA, conferring on it an open structure. The RuvB hexamer acts as an ATP-dependent pump, pulling dsDNA into and through the RuvAB complex. RuvB forms 2 homohexamers on either side of HJ DNA bound by 1 or 2 RuvA tetramers; 4 subunits per hexamer contact DNA at a time. Coordinated motions by a converter formed by DNA-disengaged RuvB subunits stimulates ATP hydrolysis and nucleotide exchange. Immobilization of the converter enables RuvB to convert the ATP-contained energy into a lever motion, pulling 2 nucleotides of DNA out of the RuvA tetramer per ATP hydrolyzed, thus driving DNA branch migration. The RuvB motors rotate together with the DNA substrate, which together with the progressing nucleotide cycle form the mechanistic basis for DNA recombination by continuous HJ branch migration. Branch migration allows RuvC to scan DNA until it finds its consensus sequence, where it cleaves and resolves cruciform DNA.</text>
</comment>
<comment type="catalytic activity">
    <reaction evidence="1">
        <text>ATP + H2O = ADP + phosphate + H(+)</text>
        <dbReference type="Rhea" id="RHEA:13065"/>
        <dbReference type="ChEBI" id="CHEBI:15377"/>
        <dbReference type="ChEBI" id="CHEBI:15378"/>
        <dbReference type="ChEBI" id="CHEBI:30616"/>
        <dbReference type="ChEBI" id="CHEBI:43474"/>
        <dbReference type="ChEBI" id="CHEBI:456216"/>
    </reaction>
</comment>
<comment type="subunit">
    <text evidence="1">Homohexamer. Forms an RuvA(8)-RuvB(12)-Holliday junction (HJ) complex. HJ DNA is sandwiched between 2 RuvA tetramers; dsDNA enters through RuvA and exits via RuvB. An RuvB hexamer assembles on each DNA strand where it exits the tetramer. Each RuvB hexamer is contacted by two RuvA subunits (via domain III) on 2 adjacent RuvB subunits; this complex drives branch migration. In the full resolvosome a probable DNA-RuvA(4)-RuvB(12)-RuvC(2) complex forms which resolves the HJ.</text>
</comment>
<comment type="subcellular location">
    <subcellularLocation>
        <location evidence="1">Cytoplasm</location>
    </subcellularLocation>
</comment>
<comment type="domain">
    <text evidence="1">Has 3 domains, the large (RuvB-L) and small ATPase (RuvB-S) domains and the C-terminal head (RuvB-H) domain. The head domain binds DNA, while the ATPase domains jointly bind ATP, ADP or are empty depending on the state of the subunit in the translocation cycle. During a single DNA translocation step the structure of each domain remains the same, but their relative positions change.</text>
</comment>
<comment type="similarity">
    <text evidence="1">Belongs to the RuvB family.</text>
</comment>
<reference key="1">
    <citation type="journal article" date="2005" name="Jpn. Agric. Res. Q.">
        <title>Genome sequence of Xanthomonas oryzae pv. oryzae suggests contribution of large numbers of effector genes and insertion sequences to its race diversity.</title>
        <authorList>
            <person name="Ochiai H."/>
            <person name="Inoue Y."/>
            <person name="Takeya M."/>
            <person name="Sasaki A."/>
            <person name="Kaku H."/>
        </authorList>
    </citation>
    <scope>NUCLEOTIDE SEQUENCE [LARGE SCALE GENOMIC DNA]</scope>
    <source>
        <strain>MAFF 311018</strain>
    </source>
</reference>